<proteinExistence type="evidence at protein level"/>
<protein>
    <recommendedName>
        <fullName evidence="7">Endoplasmic reticulum membrane adapter protein XK</fullName>
    </recommendedName>
    <alternativeName>
        <fullName evidence="7">Membrane transport protein XK</fullName>
    </alternativeName>
    <alternativeName>
        <fullName evidence="4">XK homolog</fullName>
    </alternativeName>
    <alternativeName>
        <fullName evidence="5">XK-related protein 1</fullName>
    </alternativeName>
</protein>
<organism>
    <name type="scientific">Mus musculus</name>
    <name type="common">Mouse</name>
    <dbReference type="NCBI Taxonomy" id="10090"/>
    <lineage>
        <taxon>Eukaryota</taxon>
        <taxon>Metazoa</taxon>
        <taxon>Chordata</taxon>
        <taxon>Craniata</taxon>
        <taxon>Vertebrata</taxon>
        <taxon>Euteleostomi</taxon>
        <taxon>Mammalia</taxon>
        <taxon>Eutheria</taxon>
        <taxon>Euarchontoglires</taxon>
        <taxon>Glires</taxon>
        <taxon>Rodentia</taxon>
        <taxon>Myomorpha</taxon>
        <taxon>Muroidea</taxon>
        <taxon>Muridae</taxon>
        <taxon>Murinae</taxon>
        <taxon>Mus</taxon>
        <taxon>Mus</taxon>
    </lineage>
</organism>
<feature type="chain" id="PRO_0000190768" description="Endoplasmic reticulum membrane adapter protein XK">
    <location>
        <begin position="1"/>
        <end position="446"/>
    </location>
</feature>
<feature type="topological domain" description="Cytoplasmic" evidence="3">
    <location>
        <begin position="1"/>
        <end position="2"/>
    </location>
</feature>
<feature type="transmembrane region" description="Helical" evidence="3">
    <location>
        <begin position="3"/>
        <end position="23"/>
    </location>
</feature>
<feature type="topological domain" description="Extracellular" evidence="3">
    <location>
        <begin position="24"/>
        <end position="37"/>
    </location>
</feature>
<feature type="transmembrane region" description="Helical" evidence="3">
    <location>
        <begin position="38"/>
        <end position="58"/>
    </location>
</feature>
<feature type="topological domain" description="Cytoplasmic" evidence="3">
    <location>
        <begin position="59"/>
        <end position="68"/>
    </location>
</feature>
<feature type="transmembrane region" description="Helical" evidence="3">
    <location>
        <begin position="69"/>
        <end position="89"/>
    </location>
</feature>
<feature type="topological domain" description="Extracellular" evidence="3">
    <location>
        <begin position="90"/>
        <end position="140"/>
    </location>
</feature>
<feature type="transmembrane region" description="Helical" evidence="3">
    <location>
        <begin position="141"/>
        <end position="161"/>
    </location>
</feature>
<feature type="topological domain" description="Cytoplasmic" evidence="3">
    <location>
        <begin position="162"/>
        <end position="171"/>
    </location>
</feature>
<feature type="transmembrane region" description="Helical" evidence="3">
    <location>
        <begin position="172"/>
        <end position="192"/>
    </location>
</feature>
<feature type="topological domain" description="Extracellular" evidence="3">
    <location>
        <begin position="193"/>
        <end position="208"/>
    </location>
</feature>
<feature type="transmembrane region" description="Helical" evidence="3">
    <location>
        <begin position="209"/>
        <end position="229"/>
    </location>
</feature>
<feature type="topological domain" description="Cytoplasmic" evidence="3">
    <location>
        <begin position="230"/>
        <end position="235"/>
    </location>
</feature>
<feature type="transmembrane region" description="Helical" evidence="3">
    <location>
        <begin position="236"/>
        <end position="256"/>
    </location>
</feature>
<feature type="topological domain" description="Extracellular" evidence="3">
    <location>
        <begin position="257"/>
        <end position="277"/>
    </location>
</feature>
<feature type="transmembrane region" description="Helical" evidence="3">
    <location>
        <begin position="278"/>
        <end position="298"/>
    </location>
</feature>
<feature type="topological domain" description="Cytoplasmic" evidence="3">
    <location>
        <begin position="299"/>
        <end position="317"/>
    </location>
</feature>
<feature type="transmembrane region" description="Helical" evidence="3">
    <location>
        <begin position="318"/>
        <end position="338"/>
    </location>
</feature>
<feature type="topological domain" description="Extracellular" evidence="3">
    <location>
        <begin position="339"/>
        <end position="349"/>
    </location>
</feature>
<feature type="transmembrane region" description="Helical" evidence="3">
    <location>
        <begin position="350"/>
        <end position="370"/>
    </location>
</feature>
<feature type="topological domain" description="Cytoplasmic" evidence="3">
    <location>
        <begin position="371"/>
        <end position="446"/>
    </location>
</feature>
<feature type="modified residue" description="Phosphoserine" evidence="2">
    <location>
        <position position="115"/>
    </location>
</feature>
<feature type="disulfide bond" description="Interchain (with C-53 in Kell)" evidence="1">
    <location>
        <position position="347"/>
    </location>
</feature>
<comment type="function">
    <text evidence="1">Recruits the lipid transfer protein VPS13A from lipid droplets to the endoplasmic reticulum (ER) membrane.</text>
</comment>
<comment type="subunit">
    <text evidence="1">Heterodimer with Kell; disulfide-linked. Interacts with VPS13A.</text>
</comment>
<comment type="subcellular location">
    <subcellularLocation>
        <location evidence="8">Endoplasmic reticulum membrane</location>
        <topology evidence="1">Multi-pass membrane protein</topology>
    </subcellularLocation>
</comment>
<comment type="similarity">
    <text evidence="7">Belongs to the XK family.</text>
</comment>
<reference key="1">
    <citation type="journal article" date="1999" name="Immunogenetics">
        <title>Structure and expression of the mouse homologue of the XK gene.</title>
        <authorList>
            <person name="Collec E."/>
            <person name="Colin Y."/>
            <person name="Carbonnet F."/>
            <person name="Hattab C."/>
            <person name="Bertrand O."/>
            <person name="Cartron J.-P."/>
            <person name="Kim C.L."/>
        </authorList>
    </citation>
    <scope>NUCLEOTIDE SEQUENCE [MRNA]</scope>
    <source>
        <strain>BALB/cJ</strain>
        <tissue>Skeletal muscle</tissue>
    </source>
</reference>
<reference key="2">
    <citation type="submission" date="2004-01" db="EMBL/GenBank/DDBJ databases">
        <title>A superfamily of XK-related genes (XRG) widely expressed in vertebrates and invertebrates.</title>
        <authorList>
            <person name="Huang C.-H."/>
            <person name="Chen Y."/>
        </authorList>
    </citation>
    <scope>NUCLEOTIDE SEQUENCE [MRNA]</scope>
    <source>
        <strain>C57BL/6J</strain>
    </source>
</reference>
<reference key="3">
    <citation type="journal article" date="2005" name="Science">
        <title>The transcriptional landscape of the mammalian genome.</title>
        <authorList>
            <person name="Carninci P."/>
            <person name="Kasukawa T."/>
            <person name="Katayama S."/>
            <person name="Gough J."/>
            <person name="Frith M.C."/>
            <person name="Maeda N."/>
            <person name="Oyama R."/>
            <person name="Ravasi T."/>
            <person name="Lenhard B."/>
            <person name="Wells C."/>
            <person name="Kodzius R."/>
            <person name="Shimokawa K."/>
            <person name="Bajic V.B."/>
            <person name="Brenner S.E."/>
            <person name="Batalov S."/>
            <person name="Forrest A.R."/>
            <person name="Zavolan M."/>
            <person name="Davis M.J."/>
            <person name="Wilming L.G."/>
            <person name="Aidinis V."/>
            <person name="Allen J.E."/>
            <person name="Ambesi-Impiombato A."/>
            <person name="Apweiler R."/>
            <person name="Aturaliya R.N."/>
            <person name="Bailey T.L."/>
            <person name="Bansal M."/>
            <person name="Baxter L."/>
            <person name="Beisel K.W."/>
            <person name="Bersano T."/>
            <person name="Bono H."/>
            <person name="Chalk A.M."/>
            <person name="Chiu K.P."/>
            <person name="Choudhary V."/>
            <person name="Christoffels A."/>
            <person name="Clutterbuck D.R."/>
            <person name="Crowe M.L."/>
            <person name="Dalla E."/>
            <person name="Dalrymple B.P."/>
            <person name="de Bono B."/>
            <person name="Della Gatta G."/>
            <person name="di Bernardo D."/>
            <person name="Down T."/>
            <person name="Engstrom P."/>
            <person name="Fagiolini M."/>
            <person name="Faulkner G."/>
            <person name="Fletcher C.F."/>
            <person name="Fukushima T."/>
            <person name="Furuno M."/>
            <person name="Futaki S."/>
            <person name="Gariboldi M."/>
            <person name="Georgii-Hemming P."/>
            <person name="Gingeras T.R."/>
            <person name="Gojobori T."/>
            <person name="Green R.E."/>
            <person name="Gustincich S."/>
            <person name="Harbers M."/>
            <person name="Hayashi Y."/>
            <person name="Hensch T.K."/>
            <person name="Hirokawa N."/>
            <person name="Hill D."/>
            <person name="Huminiecki L."/>
            <person name="Iacono M."/>
            <person name="Ikeo K."/>
            <person name="Iwama A."/>
            <person name="Ishikawa T."/>
            <person name="Jakt M."/>
            <person name="Kanapin A."/>
            <person name="Katoh M."/>
            <person name="Kawasawa Y."/>
            <person name="Kelso J."/>
            <person name="Kitamura H."/>
            <person name="Kitano H."/>
            <person name="Kollias G."/>
            <person name="Krishnan S.P."/>
            <person name="Kruger A."/>
            <person name="Kummerfeld S.K."/>
            <person name="Kurochkin I.V."/>
            <person name="Lareau L.F."/>
            <person name="Lazarevic D."/>
            <person name="Lipovich L."/>
            <person name="Liu J."/>
            <person name="Liuni S."/>
            <person name="McWilliam S."/>
            <person name="Madan Babu M."/>
            <person name="Madera M."/>
            <person name="Marchionni L."/>
            <person name="Matsuda H."/>
            <person name="Matsuzawa S."/>
            <person name="Miki H."/>
            <person name="Mignone F."/>
            <person name="Miyake S."/>
            <person name="Morris K."/>
            <person name="Mottagui-Tabar S."/>
            <person name="Mulder N."/>
            <person name="Nakano N."/>
            <person name="Nakauchi H."/>
            <person name="Ng P."/>
            <person name="Nilsson R."/>
            <person name="Nishiguchi S."/>
            <person name="Nishikawa S."/>
            <person name="Nori F."/>
            <person name="Ohara O."/>
            <person name="Okazaki Y."/>
            <person name="Orlando V."/>
            <person name="Pang K.C."/>
            <person name="Pavan W.J."/>
            <person name="Pavesi G."/>
            <person name="Pesole G."/>
            <person name="Petrovsky N."/>
            <person name="Piazza S."/>
            <person name="Reed J."/>
            <person name="Reid J.F."/>
            <person name="Ring B.Z."/>
            <person name="Ringwald M."/>
            <person name="Rost B."/>
            <person name="Ruan Y."/>
            <person name="Salzberg S.L."/>
            <person name="Sandelin A."/>
            <person name="Schneider C."/>
            <person name="Schoenbach C."/>
            <person name="Sekiguchi K."/>
            <person name="Semple C.A."/>
            <person name="Seno S."/>
            <person name="Sessa L."/>
            <person name="Sheng Y."/>
            <person name="Shibata Y."/>
            <person name="Shimada H."/>
            <person name="Shimada K."/>
            <person name="Silva D."/>
            <person name="Sinclair B."/>
            <person name="Sperling S."/>
            <person name="Stupka E."/>
            <person name="Sugiura K."/>
            <person name="Sultana R."/>
            <person name="Takenaka Y."/>
            <person name="Taki K."/>
            <person name="Tammoja K."/>
            <person name="Tan S.L."/>
            <person name="Tang S."/>
            <person name="Taylor M.S."/>
            <person name="Tegner J."/>
            <person name="Teichmann S.A."/>
            <person name="Ueda H.R."/>
            <person name="van Nimwegen E."/>
            <person name="Verardo R."/>
            <person name="Wei C.L."/>
            <person name="Yagi K."/>
            <person name="Yamanishi H."/>
            <person name="Zabarovsky E."/>
            <person name="Zhu S."/>
            <person name="Zimmer A."/>
            <person name="Hide W."/>
            <person name="Bult C."/>
            <person name="Grimmond S.M."/>
            <person name="Teasdale R.D."/>
            <person name="Liu E.T."/>
            <person name="Brusic V."/>
            <person name="Quackenbush J."/>
            <person name="Wahlestedt C."/>
            <person name="Mattick J.S."/>
            <person name="Hume D.A."/>
            <person name="Kai C."/>
            <person name="Sasaki D."/>
            <person name="Tomaru Y."/>
            <person name="Fukuda S."/>
            <person name="Kanamori-Katayama M."/>
            <person name="Suzuki M."/>
            <person name="Aoki J."/>
            <person name="Arakawa T."/>
            <person name="Iida J."/>
            <person name="Imamura K."/>
            <person name="Itoh M."/>
            <person name="Kato T."/>
            <person name="Kawaji H."/>
            <person name="Kawagashira N."/>
            <person name="Kawashima T."/>
            <person name="Kojima M."/>
            <person name="Kondo S."/>
            <person name="Konno H."/>
            <person name="Nakano K."/>
            <person name="Ninomiya N."/>
            <person name="Nishio T."/>
            <person name="Okada M."/>
            <person name="Plessy C."/>
            <person name="Shibata K."/>
            <person name="Shiraki T."/>
            <person name="Suzuki S."/>
            <person name="Tagami M."/>
            <person name="Waki K."/>
            <person name="Watahiki A."/>
            <person name="Okamura-Oho Y."/>
            <person name="Suzuki H."/>
            <person name="Kawai J."/>
            <person name="Hayashizaki Y."/>
        </authorList>
    </citation>
    <scope>NUCLEOTIDE SEQUENCE [LARGE SCALE MRNA]</scope>
    <source>
        <strain>C57BL/6J</strain>
        <tissue>Pancreas</tissue>
    </source>
</reference>
<reference key="4">
    <citation type="journal article" date="2000" name="Immunogenetics">
        <title>The mouse Kell blood group gene (Kel): cDNA sequence, genomic organization, expression, and enzymatic function.</title>
        <authorList>
            <person name="Lee S."/>
            <person name="Russo D.C."/>
            <person name="Pu J."/>
            <person name="Ho M."/>
            <person name="Redman C.M."/>
        </authorList>
    </citation>
    <scope>SUBUNIT</scope>
</reference>
<reference key="5">
    <citation type="journal article" date="2014" name="J. Biol. Chem.">
        <title>Exposure of phosphatidylserine by Xk-related protein family members during apoptosis.</title>
        <authorList>
            <person name="Suzuki J."/>
            <person name="Imanishi E."/>
            <person name="Nagata S."/>
        </authorList>
    </citation>
    <scope>SUBCELLULAR LOCATION</scope>
</reference>
<dbReference type="EMBL" id="AF155511">
    <property type="protein sequence ID" value="AAF14527.1"/>
    <property type="molecule type" value="mRNA"/>
</dbReference>
<dbReference type="EMBL" id="AY534248">
    <property type="protein sequence ID" value="AAT07097.1"/>
    <property type="molecule type" value="mRNA"/>
</dbReference>
<dbReference type="EMBL" id="AK007734">
    <property type="protein sequence ID" value="BAB25222.1"/>
    <property type="molecule type" value="mRNA"/>
</dbReference>
<dbReference type="CCDS" id="CCDS30008.1"/>
<dbReference type="RefSeq" id="NP_075989.1">
    <property type="nucleotide sequence ID" value="NM_023500.2"/>
</dbReference>
<dbReference type="SMR" id="Q9QXY7"/>
<dbReference type="BioGRID" id="204592">
    <property type="interactions" value="1"/>
</dbReference>
<dbReference type="FunCoup" id="Q9QXY7">
    <property type="interactions" value="665"/>
</dbReference>
<dbReference type="STRING" id="10090.ENSMUSP00000015486"/>
<dbReference type="ChEMBL" id="CHEMBL2176802"/>
<dbReference type="PhosphoSitePlus" id="Q9QXY7"/>
<dbReference type="SwissPalm" id="Q9QXY7"/>
<dbReference type="PaxDb" id="10090-ENSMUSP00000015486"/>
<dbReference type="ProteomicsDB" id="300003"/>
<dbReference type="Antibodypedia" id="10552">
    <property type="antibodies" value="158 antibodies from 27 providers"/>
</dbReference>
<dbReference type="DNASU" id="22439"/>
<dbReference type="Ensembl" id="ENSMUST00000015486.7">
    <property type="protein sequence ID" value="ENSMUSP00000015486.7"/>
    <property type="gene ID" value="ENSMUSG00000015342.7"/>
</dbReference>
<dbReference type="GeneID" id="22439"/>
<dbReference type="KEGG" id="mmu:22439"/>
<dbReference type="UCSC" id="uc009spq.1">
    <property type="organism name" value="mouse"/>
</dbReference>
<dbReference type="AGR" id="MGI:103569"/>
<dbReference type="CTD" id="7504"/>
<dbReference type="MGI" id="MGI:103569">
    <property type="gene designation" value="Xk"/>
</dbReference>
<dbReference type="VEuPathDB" id="HostDB:ENSMUSG00000015342"/>
<dbReference type="eggNOG" id="ENOG502QTTF">
    <property type="taxonomic scope" value="Eukaryota"/>
</dbReference>
<dbReference type="GeneTree" id="ENSGT00390000003231"/>
<dbReference type="HOGENOM" id="CLU_037429_1_1_1"/>
<dbReference type="InParanoid" id="Q9QXY7"/>
<dbReference type="OMA" id="SGGDGMW"/>
<dbReference type="OrthoDB" id="10037417at2759"/>
<dbReference type="PhylomeDB" id="Q9QXY7"/>
<dbReference type="TreeFam" id="TF331465"/>
<dbReference type="Reactome" id="R-MMU-375276">
    <property type="pathway name" value="Peptide ligand-binding receptors"/>
</dbReference>
<dbReference type="BioGRID-ORCS" id="22439">
    <property type="hits" value="3 hits in 77 CRISPR screens"/>
</dbReference>
<dbReference type="PRO" id="PR:Q9QXY7"/>
<dbReference type="Proteomes" id="UP000000589">
    <property type="component" value="Chromosome X"/>
</dbReference>
<dbReference type="RNAct" id="Q9QXY7">
    <property type="molecule type" value="protein"/>
</dbReference>
<dbReference type="Bgee" id="ENSMUSG00000015342">
    <property type="expression patterns" value="Expressed in hindlimb stylopod muscle and 69 other cell types or tissues"/>
</dbReference>
<dbReference type="ExpressionAtlas" id="Q9QXY7">
    <property type="expression patterns" value="baseline and differential"/>
</dbReference>
<dbReference type="GO" id="GO:0005789">
    <property type="term" value="C:endoplasmic reticulum membrane"/>
    <property type="evidence" value="ECO:0000250"/>
    <property type="project" value="UniProtKB"/>
</dbReference>
<dbReference type="GO" id="GO:0005886">
    <property type="term" value="C:plasma membrane"/>
    <property type="evidence" value="ECO:0000314"/>
    <property type="project" value="UniProtKB"/>
</dbReference>
<dbReference type="GO" id="GO:0030674">
    <property type="term" value="F:protein-macromolecule adaptor activity"/>
    <property type="evidence" value="ECO:0000250"/>
    <property type="project" value="UniProtKB"/>
</dbReference>
<dbReference type="GO" id="GO:0006865">
    <property type="term" value="P:amino acid transport"/>
    <property type="evidence" value="ECO:0007669"/>
    <property type="project" value="UniProtKB-KW"/>
</dbReference>
<dbReference type="GO" id="GO:0006874">
    <property type="term" value="P:intracellular calcium ion homeostasis"/>
    <property type="evidence" value="ECO:0000316"/>
    <property type="project" value="MGI"/>
</dbReference>
<dbReference type="GO" id="GO:0010961">
    <property type="term" value="P:intracellular magnesium ion homeostasis"/>
    <property type="evidence" value="ECO:0000316"/>
    <property type="project" value="MGI"/>
</dbReference>
<dbReference type="GO" id="GO:0042552">
    <property type="term" value="P:myelination"/>
    <property type="evidence" value="ECO:0000315"/>
    <property type="project" value="MGI"/>
</dbReference>
<dbReference type="GO" id="GO:0031133">
    <property type="term" value="P:regulation of axon diameter"/>
    <property type="evidence" value="ECO:0000316"/>
    <property type="project" value="MGI"/>
</dbReference>
<dbReference type="GO" id="GO:0008361">
    <property type="term" value="P:regulation of cell size"/>
    <property type="evidence" value="ECO:0000316"/>
    <property type="project" value="MGI"/>
</dbReference>
<dbReference type="GO" id="GO:0048741">
    <property type="term" value="P:skeletal muscle fiber development"/>
    <property type="evidence" value="ECO:0000316"/>
    <property type="project" value="MGI"/>
</dbReference>
<dbReference type="InterPro" id="IPR018629">
    <property type="entry name" value="XK-rel"/>
</dbReference>
<dbReference type="InterPro" id="IPR051773">
    <property type="entry name" value="XK-related_adapter"/>
</dbReference>
<dbReference type="PANTHER" id="PTHR14297:SF8">
    <property type="entry name" value="ENDOPLASMIC RETICULUM MEMBRANE ADAPTER PROTEIN XK"/>
    <property type="match status" value="1"/>
</dbReference>
<dbReference type="PANTHER" id="PTHR14297">
    <property type="entry name" value="MEMBRANE TRANSPORT PROTEIN XK FAMILY MEMBER"/>
    <property type="match status" value="1"/>
</dbReference>
<dbReference type="Pfam" id="PF09815">
    <property type="entry name" value="XK-related"/>
    <property type="match status" value="1"/>
</dbReference>
<evidence type="ECO:0000250" key="1">
    <source>
        <dbReference type="UniProtKB" id="P51811"/>
    </source>
</evidence>
<evidence type="ECO:0000250" key="2">
    <source>
        <dbReference type="UniProtKB" id="Q5GH61"/>
    </source>
</evidence>
<evidence type="ECO:0000255" key="3"/>
<evidence type="ECO:0000303" key="4">
    <source>
    </source>
</evidence>
<evidence type="ECO:0000303" key="5">
    <source>
    </source>
</evidence>
<evidence type="ECO:0000303" key="6">
    <source ref="2"/>
</evidence>
<evidence type="ECO:0000305" key="7"/>
<evidence type="ECO:0000305" key="8">
    <source>
    </source>
</evidence>
<gene>
    <name evidence="4" type="primary">Xk</name>
    <name evidence="4" type="synonym">Xkh</name>
    <name evidence="5" type="synonym">Xkr1</name>
    <name evidence="6" type="synonym">Xrg1</name>
</gene>
<keyword id="KW-0029">Amino-acid transport</keyword>
<keyword id="KW-1015">Disulfide bond</keyword>
<keyword id="KW-0256">Endoplasmic reticulum</keyword>
<keyword id="KW-0472">Membrane</keyword>
<keyword id="KW-0597">Phosphoprotein</keyword>
<keyword id="KW-1185">Reference proteome</keyword>
<keyword id="KW-0812">Transmembrane</keyword>
<keyword id="KW-1133">Transmembrane helix</keyword>
<keyword id="KW-0813">Transport</keyword>
<accession>Q9QXY7</accession>
<sequence length="446" mass="51115">MKFPASVIASVFLFVAETAAALYLSSTYRSAGDRMWQVLTLLFSLMPCALVQFTLLFVHRDLSRDRPLALLMHLLQLGPLYRCCEVFCIYCQSDQNEEPYVSITKKRQMPKDGLSEEVEKEVGQAEGKLITHRSAFSRASVIQAFLGSAPQLTLQLYITVLEQNITTGRCFIMTLSLLSIVYGALRCNILAIKIKYDEYEVKVKPLAYVCIFLWRSFEIATRVIVLVLFTSVLKIWVVAVILVNFFSFFLYPWIVFWCSGSPFPENIEKALSRVGTTIVLCFLTLLYAGINMFCWSAVQLKIDNPELISKSQNWYRLLIYYMTRFIENSVLLLLWYFFKTDIYMYVCAPLLILQLLIGYCTGILFMLVFYQFFHPCKKLFSSSVSESFRALLRCACWSSLRRKSSEPVGRIDTDLKACTEQDVMPTTSKVIPEATDIWTAVDLCSA</sequence>
<name>XK_MOUSE</name>